<gene>
    <name evidence="1" type="primary">fabH</name>
    <name type="ordered locus">SF1095</name>
    <name type="ordered locus">S1175</name>
</gene>
<proteinExistence type="inferred from homology"/>
<evidence type="ECO:0000255" key="1">
    <source>
        <dbReference type="HAMAP-Rule" id="MF_01815"/>
    </source>
</evidence>
<name>FABH_SHIFL</name>
<organism>
    <name type="scientific">Shigella flexneri</name>
    <dbReference type="NCBI Taxonomy" id="623"/>
    <lineage>
        <taxon>Bacteria</taxon>
        <taxon>Pseudomonadati</taxon>
        <taxon>Pseudomonadota</taxon>
        <taxon>Gammaproteobacteria</taxon>
        <taxon>Enterobacterales</taxon>
        <taxon>Enterobacteriaceae</taxon>
        <taxon>Shigella</taxon>
    </lineage>
</organism>
<feature type="chain" id="PRO_0000110467" description="Beta-ketoacyl-[acyl-carrier-protein] synthase III">
    <location>
        <begin position="1"/>
        <end position="317"/>
    </location>
</feature>
<feature type="region of interest" description="ACP-binding" evidence="1">
    <location>
        <begin position="245"/>
        <end position="249"/>
    </location>
</feature>
<feature type="active site" evidence="1">
    <location>
        <position position="112"/>
    </location>
</feature>
<feature type="active site" evidence="1">
    <location>
        <position position="244"/>
    </location>
</feature>
<feature type="active site" evidence="1">
    <location>
        <position position="274"/>
    </location>
</feature>
<comment type="function">
    <text evidence="1">Catalyzes the condensation reaction of fatty acid synthesis by the addition to an acyl acceptor of two carbons from malonyl-ACP. Catalyzes the first condensation reaction which initiates fatty acid synthesis and may therefore play a role in governing the total rate of fatty acid production. Possesses both acetoacetyl-ACP synthase and acetyl transacylase activities. Its substrate specificity determines the biosynthesis of branched-chain and/or straight-chain of fatty acids.</text>
</comment>
<comment type="catalytic activity">
    <reaction evidence="1">
        <text>malonyl-[ACP] + acetyl-CoA + H(+) = 3-oxobutanoyl-[ACP] + CO2 + CoA</text>
        <dbReference type="Rhea" id="RHEA:12080"/>
        <dbReference type="Rhea" id="RHEA-COMP:9623"/>
        <dbReference type="Rhea" id="RHEA-COMP:9625"/>
        <dbReference type="ChEBI" id="CHEBI:15378"/>
        <dbReference type="ChEBI" id="CHEBI:16526"/>
        <dbReference type="ChEBI" id="CHEBI:57287"/>
        <dbReference type="ChEBI" id="CHEBI:57288"/>
        <dbReference type="ChEBI" id="CHEBI:78449"/>
        <dbReference type="ChEBI" id="CHEBI:78450"/>
        <dbReference type="EC" id="2.3.1.180"/>
    </reaction>
</comment>
<comment type="pathway">
    <text evidence="1">Lipid metabolism; fatty acid biosynthesis.</text>
</comment>
<comment type="subunit">
    <text evidence="1">Homodimer.</text>
</comment>
<comment type="subcellular location">
    <subcellularLocation>
        <location evidence="1">Cytoplasm</location>
    </subcellularLocation>
</comment>
<comment type="domain">
    <text evidence="1">The last Arg residue of the ACP-binding site is essential for the weak association between ACP/AcpP and FabH.</text>
</comment>
<comment type="similarity">
    <text evidence="1">Belongs to the thiolase-like superfamily. FabH family.</text>
</comment>
<keyword id="KW-0012">Acyltransferase</keyword>
<keyword id="KW-0963">Cytoplasm</keyword>
<keyword id="KW-0275">Fatty acid biosynthesis</keyword>
<keyword id="KW-0276">Fatty acid metabolism</keyword>
<keyword id="KW-0444">Lipid biosynthesis</keyword>
<keyword id="KW-0443">Lipid metabolism</keyword>
<keyword id="KW-0511">Multifunctional enzyme</keyword>
<keyword id="KW-1185">Reference proteome</keyword>
<keyword id="KW-0808">Transferase</keyword>
<accession>Q83RS8</accession>
<sequence>MYTKIIGTGSYLPEQVRTNADLEKMVDTSDEWIVTRTGIRERHIAAPNETVSTMGFEAATRAIEMAGIEKDQIGLIVVATTSATHAFPSAACQIQSMLDIKGCPAFDVAAACAGFTYALSVADQYVKSGAVKYALVVGSDVLARTCDPTDRGTIIIFGDGAGAAVLAASEEPGIISTHLHADGSYGELLTLPNADRVNPENSIHLTMAGNEVFKVAVTELAHIVDETLAANNLDRSQLDWLVPHQANLRIISATAKKLGMSMDNVVVTLDRHGNTSAASVPCALDEAVRDGRIKPGQLVLLEAFGGGFTWGSALVRF</sequence>
<protein>
    <recommendedName>
        <fullName evidence="1">Beta-ketoacyl-[acyl-carrier-protein] synthase III</fullName>
        <shortName evidence="1">Beta-ketoacyl-ACP synthase III</shortName>
        <shortName evidence="1">KAS III</shortName>
        <ecNumber evidence="1">2.3.1.180</ecNumber>
    </recommendedName>
    <alternativeName>
        <fullName evidence="1">3-oxoacyl-[acyl-carrier-protein] synthase 3</fullName>
    </alternativeName>
    <alternativeName>
        <fullName evidence="1">3-oxoacyl-[acyl-carrier-protein] synthase III</fullName>
    </alternativeName>
</protein>
<dbReference type="EC" id="2.3.1.180" evidence="1"/>
<dbReference type="EMBL" id="AE005674">
    <property type="protein sequence ID" value="AAN42714.1"/>
    <property type="molecule type" value="Genomic_DNA"/>
</dbReference>
<dbReference type="EMBL" id="AE014073">
    <property type="protein sequence ID" value="AAP16602.1"/>
    <property type="molecule type" value="Genomic_DNA"/>
</dbReference>
<dbReference type="RefSeq" id="NP_707007.1">
    <property type="nucleotide sequence ID" value="NC_004337.2"/>
</dbReference>
<dbReference type="RefSeq" id="WP_000288128.1">
    <property type="nucleotide sequence ID" value="NZ_WPGW01000001.1"/>
</dbReference>
<dbReference type="SMR" id="Q83RS8"/>
<dbReference type="STRING" id="198214.SF1095"/>
<dbReference type="PaxDb" id="198214-SF1095"/>
<dbReference type="GeneID" id="1024024"/>
<dbReference type="KEGG" id="sfl:SF1095"/>
<dbReference type="KEGG" id="sfx:S1175"/>
<dbReference type="PATRIC" id="fig|198214.7.peg.1283"/>
<dbReference type="HOGENOM" id="CLU_039592_4_1_6"/>
<dbReference type="UniPathway" id="UPA00094"/>
<dbReference type="Proteomes" id="UP000001006">
    <property type="component" value="Chromosome"/>
</dbReference>
<dbReference type="Proteomes" id="UP000002673">
    <property type="component" value="Chromosome"/>
</dbReference>
<dbReference type="GO" id="GO:0005737">
    <property type="term" value="C:cytoplasm"/>
    <property type="evidence" value="ECO:0007669"/>
    <property type="project" value="UniProtKB-SubCell"/>
</dbReference>
<dbReference type="GO" id="GO:0004315">
    <property type="term" value="F:3-oxoacyl-[acyl-carrier-protein] synthase activity"/>
    <property type="evidence" value="ECO:0007669"/>
    <property type="project" value="InterPro"/>
</dbReference>
<dbReference type="GO" id="GO:0033818">
    <property type="term" value="F:beta-ketoacyl-acyl-carrier-protein synthase III activity"/>
    <property type="evidence" value="ECO:0007669"/>
    <property type="project" value="UniProtKB-UniRule"/>
</dbReference>
<dbReference type="GO" id="GO:0006633">
    <property type="term" value="P:fatty acid biosynthetic process"/>
    <property type="evidence" value="ECO:0007669"/>
    <property type="project" value="UniProtKB-UniRule"/>
</dbReference>
<dbReference type="CDD" id="cd00830">
    <property type="entry name" value="KAS_III"/>
    <property type="match status" value="1"/>
</dbReference>
<dbReference type="FunFam" id="3.40.47.10:FF:000004">
    <property type="entry name" value="3-oxoacyl-[acyl-carrier-protein] synthase 3"/>
    <property type="match status" value="1"/>
</dbReference>
<dbReference type="Gene3D" id="3.40.47.10">
    <property type="match status" value="1"/>
</dbReference>
<dbReference type="HAMAP" id="MF_01815">
    <property type="entry name" value="FabH"/>
    <property type="match status" value="1"/>
</dbReference>
<dbReference type="InterPro" id="IPR013747">
    <property type="entry name" value="ACP_syn_III_C"/>
</dbReference>
<dbReference type="InterPro" id="IPR013751">
    <property type="entry name" value="ACP_syn_III_N"/>
</dbReference>
<dbReference type="InterPro" id="IPR004655">
    <property type="entry name" value="FabH"/>
</dbReference>
<dbReference type="InterPro" id="IPR016039">
    <property type="entry name" value="Thiolase-like"/>
</dbReference>
<dbReference type="NCBIfam" id="TIGR00747">
    <property type="entry name" value="fabH"/>
    <property type="match status" value="1"/>
</dbReference>
<dbReference type="NCBIfam" id="NF006829">
    <property type="entry name" value="PRK09352.1"/>
    <property type="match status" value="1"/>
</dbReference>
<dbReference type="PANTHER" id="PTHR43091">
    <property type="entry name" value="3-OXOACYL-[ACYL-CARRIER-PROTEIN] SYNTHASE"/>
    <property type="match status" value="1"/>
</dbReference>
<dbReference type="PANTHER" id="PTHR43091:SF1">
    <property type="entry name" value="BETA-KETOACYL-[ACYL-CARRIER-PROTEIN] SYNTHASE III, CHLOROPLASTIC"/>
    <property type="match status" value="1"/>
</dbReference>
<dbReference type="Pfam" id="PF08545">
    <property type="entry name" value="ACP_syn_III"/>
    <property type="match status" value="1"/>
</dbReference>
<dbReference type="Pfam" id="PF08541">
    <property type="entry name" value="ACP_syn_III_C"/>
    <property type="match status" value="1"/>
</dbReference>
<dbReference type="SUPFAM" id="SSF53901">
    <property type="entry name" value="Thiolase-like"/>
    <property type="match status" value="1"/>
</dbReference>
<reference key="1">
    <citation type="journal article" date="2002" name="Nucleic Acids Res.">
        <title>Genome sequence of Shigella flexneri 2a: insights into pathogenicity through comparison with genomes of Escherichia coli K12 and O157.</title>
        <authorList>
            <person name="Jin Q."/>
            <person name="Yuan Z."/>
            <person name="Xu J."/>
            <person name="Wang Y."/>
            <person name="Shen Y."/>
            <person name="Lu W."/>
            <person name="Wang J."/>
            <person name="Liu H."/>
            <person name="Yang J."/>
            <person name="Yang F."/>
            <person name="Zhang X."/>
            <person name="Zhang J."/>
            <person name="Yang G."/>
            <person name="Wu H."/>
            <person name="Qu D."/>
            <person name="Dong J."/>
            <person name="Sun L."/>
            <person name="Xue Y."/>
            <person name="Zhao A."/>
            <person name="Gao Y."/>
            <person name="Zhu J."/>
            <person name="Kan B."/>
            <person name="Ding K."/>
            <person name="Chen S."/>
            <person name="Cheng H."/>
            <person name="Yao Z."/>
            <person name="He B."/>
            <person name="Chen R."/>
            <person name="Ma D."/>
            <person name="Qiang B."/>
            <person name="Wen Y."/>
            <person name="Hou Y."/>
            <person name="Yu J."/>
        </authorList>
    </citation>
    <scope>NUCLEOTIDE SEQUENCE [LARGE SCALE GENOMIC DNA]</scope>
    <source>
        <strain>301 / Serotype 2a</strain>
    </source>
</reference>
<reference key="2">
    <citation type="journal article" date="2003" name="Infect. Immun.">
        <title>Complete genome sequence and comparative genomics of Shigella flexneri serotype 2a strain 2457T.</title>
        <authorList>
            <person name="Wei J."/>
            <person name="Goldberg M.B."/>
            <person name="Burland V."/>
            <person name="Venkatesan M.M."/>
            <person name="Deng W."/>
            <person name="Fournier G."/>
            <person name="Mayhew G.F."/>
            <person name="Plunkett G. III"/>
            <person name="Rose D.J."/>
            <person name="Darling A."/>
            <person name="Mau B."/>
            <person name="Perna N.T."/>
            <person name="Payne S.M."/>
            <person name="Runyen-Janecky L.J."/>
            <person name="Zhou S."/>
            <person name="Schwartz D.C."/>
            <person name="Blattner F.R."/>
        </authorList>
    </citation>
    <scope>NUCLEOTIDE SEQUENCE [LARGE SCALE GENOMIC DNA]</scope>
    <source>
        <strain>ATCC 700930 / 2457T / Serotype 2a</strain>
    </source>
</reference>